<sequence>MCTLEKRGDLFLLTLTGDGEHRFHPDTIATILSLLEQAKSQSTRGSILITTANGKFFSNGFDLAWAQTAGSKTGAANRLHQMVESFKPVVAALLDLPMPTIAALNGHAAAAGLILALSHDYVFMRKDRGVLYMSEVDIGLSMPDYFSALVRAKIGTSAARRELLLSGKKIRGEEAVGLGIVDSAAYDSEEGVVVASVRLGEKLAAKKWSGEVYASIRKSLYPELCGILGLETRVFATPKL</sequence>
<name>ECI2_ARATH</name>
<gene>
    <name evidence="6" type="primary">ECI2</name>
    <name evidence="7" type="synonym">IBR10</name>
    <name evidence="9" type="ordered locus">At4g14430</name>
    <name evidence="10" type="ORF">dl3255c</name>
</gene>
<organism>
    <name type="scientific">Arabidopsis thaliana</name>
    <name type="common">Mouse-ear cress</name>
    <dbReference type="NCBI Taxonomy" id="3702"/>
    <lineage>
        <taxon>Eukaryota</taxon>
        <taxon>Viridiplantae</taxon>
        <taxon>Streptophyta</taxon>
        <taxon>Embryophyta</taxon>
        <taxon>Tracheophyta</taxon>
        <taxon>Spermatophyta</taxon>
        <taxon>Magnoliopsida</taxon>
        <taxon>eudicotyledons</taxon>
        <taxon>Gunneridae</taxon>
        <taxon>Pentapetalae</taxon>
        <taxon>rosids</taxon>
        <taxon>malvids</taxon>
        <taxon>Brassicales</taxon>
        <taxon>Brassicaceae</taxon>
        <taxon>Camelineae</taxon>
        <taxon>Arabidopsis</taxon>
    </lineage>
</organism>
<dbReference type="EC" id="5.3.3.8" evidence="3"/>
<dbReference type="EMBL" id="Z97336">
    <property type="protein sequence ID" value="CAB10222.1"/>
    <property type="molecule type" value="Genomic_DNA"/>
</dbReference>
<dbReference type="EMBL" id="AL161539">
    <property type="protein sequence ID" value="CAB78485.1"/>
    <property type="molecule type" value="Genomic_DNA"/>
</dbReference>
<dbReference type="EMBL" id="CP002687">
    <property type="protein sequence ID" value="AEE83444.1"/>
    <property type="molecule type" value="Genomic_DNA"/>
</dbReference>
<dbReference type="EMBL" id="AF380640">
    <property type="protein sequence ID" value="AAK55721.1"/>
    <property type="molecule type" value="mRNA"/>
</dbReference>
<dbReference type="EMBL" id="AY056091">
    <property type="protein sequence ID" value="AAL06979.1"/>
    <property type="molecule type" value="mRNA"/>
</dbReference>
<dbReference type="EMBL" id="AK229431">
    <property type="protein sequence ID" value="BAF01291.1"/>
    <property type="molecule type" value="mRNA"/>
</dbReference>
<dbReference type="EMBL" id="AY086877">
    <property type="protein sequence ID" value="AAM63923.1"/>
    <property type="molecule type" value="mRNA"/>
</dbReference>
<dbReference type="PIR" id="D71406">
    <property type="entry name" value="D71406"/>
</dbReference>
<dbReference type="RefSeq" id="NP_193179.1">
    <property type="nucleotide sequence ID" value="NM_117522.3"/>
</dbReference>
<dbReference type="SMR" id="O23299"/>
<dbReference type="FunCoup" id="O23299">
    <property type="interactions" value="305"/>
</dbReference>
<dbReference type="IntAct" id="O23299">
    <property type="interactions" value="1"/>
</dbReference>
<dbReference type="STRING" id="3702.O23299"/>
<dbReference type="PaxDb" id="3702-AT4G14430.1"/>
<dbReference type="ProMEX" id="O23299"/>
<dbReference type="ProteomicsDB" id="224722"/>
<dbReference type="EnsemblPlants" id="AT4G14430.1">
    <property type="protein sequence ID" value="AT4G14430.1"/>
    <property type="gene ID" value="AT4G14430"/>
</dbReference>
<dbReference type="GeneID" id="827088"/>
<dbReference type="Gramene" id="AT4G14430.1">
    <property type="protein sequence ID" value="AT4G14430.1"/>
    <property type="gene ID" value="AT4G14430"/>
</dbReference>
<dbReference type="KEGG" id="ath:AT4G14430"/>
<dbReference type="Araport" id="AT4G14430"/>
<dbReference type="TAIR" id="AT4G14430">
    <property type="gene designation" value="IBR10"/>
</dbReference>
<dbReference type="eggNOG" id="ENOG502QS1J">
    <property type="taxonomic scope" value="Eukaryota"/>
</dbReference>
<dbReference type="HOGENOM" id="CLU_009834_3_2_1"/>
<dbReference type="InParanoid" id="O23299"/>
<dbReference type="OMA" id="SIVCTNP"/>
<dbReference type="PhylomeDB" id="O23299"/>
<dbReference type="BioCyc" id="ARA:AT4G14430-MONOMER"/>
<dbReference type="BioCyc" id="MetaCyc:AT4G14430-MONOMER"/>
<dbReference type="UniPathway" id="UPA00659"/>
<dbReference type="PRO" id="PR:O23299"/>
<dbReference type="Proteomes" id="UP000006548">
    <property type="component" value="Chromosome 4"/>
</dbReference>
<dbReference type="ExpressionAtlas" id="O23299">
    <property type="expression patterns" value="baseline and differential"/>
</dbReference>
<dbReference type="GO" id="GO:0005777">
    <property type="term" value="C:peroxisome"/>
    <property type="evidence" value="ECO:0007005"/>
    <property type="project" value="TAIR"/>
</dbReference>
<dbReference type="GO" id="GO:0004165">
    <property type="term" value="F:delta(3)-delta(2)-enoyl-CoA isomerase activity"/>
    <property type="evidence" value="ECO:0000314"/>
    <property type="project" value="TAIR"/>
</dbReference>
<dbReference type="GO" id="GO:0006635">
    <property type="term" value="P:fatty acid beta-oxidation"/>
    <property type="evidence" value="ECO:0007669"/>
    <property type="project" value="UniProtKB-UniPathway"/>
</dbReference>
<dbReference type="GO" id="GO:0009062">
    <property type="term" value="P:fatty acid catabolic process"/>
    <property type="evidence" value="ECO:0000315"/>
    <property type="project" value="TAIR"/>
</dbReference>
<dbReference type="GO" id="GO:0080024">
    <property type="term" value="P:indolebutyric acid metabolic process"/>
    <property type="evidence" value="ECO:0000315"/>
    <property type="project" value="TAIR"/>
</dbReference>
<dbReference type="GO" id="GO:0080026">
    <property type="term" value="P:response to indolebutyric acid"/>
    <property type="evidence" value="ECO:0000315"/>
    <property type="project" value="TAIR"/>
</dbReference>
<dbReference type="GO" id="GO:0048767">
    <property type="term" value="P:root hair elongation"/>
    <property type="evidence" value="ECO:0000315"/>
    <property type="project" value="TAIR"/>
</dbReference>
<dbReference type="CDD" id="cd06558">
    <property type="entry name" value="crotonase-like"/>
    <property type="match status" value="1"/>
</dbReference>
<dbReference type="FunFam" id="3.90.226.10:FF:000049">
    <property type="entry name" value="Enoyl-CoA delta isomerase 3"/>
    <property type="match status" value="1"/>
</dbReference>
<dbReference type="Gene3D" id="3.90.226.10">
    <property type="entry name" value="2-enoyl-CoA Hydratase, Chain A, domain 1"/>
    <property type="match status" value="1"/>
</dbReference>
<dbReference type="InterPro" id="IPR029045">
    <property type="entry name" value="ClpP/crotonase-like_dom_sf"/>
</dbReference>
<dbReference type="InterPro" id="IPR001753">
    <property type="entry name" value="Enoyl-CoA_hydra/iso"/>
</dbReference>
<dbReference type="PANTHER" id="PTHR11941">
    <property type="entry name" value="ENOYL-COA HYDRATASE-RELATED"/>
    <property type="match status" value="1"/>
</dbReference>
<dbReference type="PANTHER" id="PTHR11941:SF75">
    <property type="entry name" value="ENOYL-COA HYDRATASE_ISOMERASE FAMILY PROTEIN"/>
    <property type="match status" value="1"/>
</dbReference>
<dbReference type="Pfam" id="PF00378">
    <property type="entry name" value="ECH_1"/>
    <property type="match status" value="1"/>
</dbReference>
<dbReference type="SUPFAM" id="SSF52096">
    <property type="entry name" value="ClpP/crotonase"/>
    <property type="match status" value="1"/>
</dbReference>
<keyword id="KW-0276">Fatty acid metabolism</keyword>
<keyword id="KW-0413">Isomerase</keyword>
<keyword id="KW-0443">Lipid metabolism</keyword>
<keyword id="KW-0576">Peroxisome</keyword>
<keyword id="KW-1185">Reference proteome</keyword>
<accession>O23299</accession>
<accession>Q8LC07</accession>
<evidence type="ECO:0000250" key="1">
    <source>
        <dbReference type="UniProtKB" id="P42126"/>
    </source>
</evidence>
<evidence type="ECO:0000269" key="2">
    <source>
    </source>
</evidence>
<evidence type="ECO:0000269" key="3">
    <source>
    </source>
</evidence>
<evidence type="ECO:0000269" key="4">
    <source>
    </source>
</evidence>
<evidence type="ECO:0000269" key="5">
    <source>
    </source>
</evidence>
<evidence type="ECO:0000303" key="6">
    <source>
    </source>
</evidence>
<evidence type="ECO:0000303" key="7">
    <source>
    </source>
</evidence>
<evidence type="ECO:0000305" key="8"/>
<evidence type="ECO:0000312" key="9">
    <source>
        <dbReference type="Araport" id="AT4G14430"/>
    </source>
</evidence>
<evidence type="ECO:0000312" key="10">
    <source>
        <dbReference type="EMBL" id="CAB10222.1"/>
    </source>
</evidence>
<proteinExistence type="evidence at protein level"/>
<protein>
    <recommendedName>
        <fullName evidence="8">Enoyl-CoA delta isomerase 2, peroxisomal</fullName>
        <ecNumber evidence="3">5.3.3.8</ecNumber>
    </recommendedName>
    <alternativeName>
        <fullName evidence="6">Delta(3),Delta(2)-enoyl CoA isomerase 2</fullName>
        <shortName evidence="6">AtECI2</shortName>
    </alternativeName>
    <alternativeName>
        <fullName evidence="7">Indole-3-butyric acid response 10</fullName>
    </alternativeName>
</protein>
<comment type="function">
    <text evidence="3 5">Able to isomerize both 3-cis and 3-trans double bonds into the 2-trans form in a range of enoyl-CoA species. Essential for the beta oxidation of unsaturated fatty acids (PubMed:18657232). Involved with IBR1 and IBR3 in the peroxisomal beta-oxidation of indole-3-butyric acid (IBA) to form indole-3-acetic acid (IAA), a biologically active auxin (PubMed:20562230).</text>
</comment>
<comment type="catalytic activity">
    <reaction evidence="3">
        <text>a (3Z)-enoyl-CoA = a 4-saturated (2E)-enoyl-CoA</text>
        <dbReference type="Rhea" id="RHEA:45900"/>
        <dbReference type="ChEBI" id="CHEBI:85097"/>
        <dbReference type="ChEBI" id="CHEBI:85489"/>
        <dbReference type="EC" id="5.3.3.8"/>
    </reaction>
</comment>
<comment type="catalytic activity">
    <reaction evidence="3">
        <text>a (3E)-enoyl-CoA = a 4-saturated (2E)-enoyl-CoA</text>
        <dbReference type="Rhea" id="RHEA:45228"/>
        <dbReference type="ChEBI" id="CHEBI:58521"/>
        <dbReference type="ChEBI" id="CHEBI:85097"/>
        <dbReference type="EC" id="5.3.3.8"/>
    </reaction>
</comment>
<comment type="pathway">
    <text evidence="8">Lipid metabolism; fatty acid beta-oxidation.</text>
</comment>
<comment type="subcellular location">
    <subcellularLocation>
        <location evidence="2 3">Peroxisome</location>
    </subcellularLocation>
</comment>
<comment type="disruption phenotype">
    <text evidence="4 5">Defective in root hair expansion (PubMed:20562230). Mutant plants are resistant to the inhibitory effect of intermediate levels of indole-3-butyric acid (IBA) and 2,4-DB on root elongation (PubMed:18725356).</text>
</comment>
<comment type="similarity">
    <text evidence="8">Belongs to the enoyl-CoA hydratase/isomerase family.</text>
</comment>
<reference key="1">
    <citation type="journal article" date="1998" name="Nature">
        <title>Analysis of 1.9 Mb of contiguous sequence from chromosome 4 of Arabidopsis thaliana.</title>
        <authorList>
            <person name="Bevan M."/>
            <person name="Bancroft I."/>
            <person name="Bent E."/>
            <person name="Love K."/>
            <person name="Goodman H.M."/>
            <person name="Dean C."/>
            <person name="Bergkamp R."/>
            <person name="Dirkse W."/>
            <person name="van Staveren M."/>
            <person name="Stiekema W."/>
            <person name="Drost L."/>
            <person name="Ridley P."/>
            <person name="Hudson S.-A."/>
            <person name="Patel K."/>
            <person name="Murphy G."/>
            <person name="Piffanelli P."/>
            <person name="Wedler H."/>
            <person name="Wedler E."/>
            <person name="Wambutt R."/>
            <person name="Weitzenegger T."/>
            <person name="Pohl T."/>
            <person name="Terryn N."/>
            <person name="Gielen J."/>
            <person name="Villarroel R."/>
            <person name="De Clercq R."/>
            <person name="van Montagu M."/>
            <person name="Lecharny A."/>
            <person name="Aubourg S."/>
            <person name="Gy I."/>
            <person name="Kreis M."/>
            <person name="Lao N."/>
            <person name="Kavanagh T."/>
            <person name="Hempel S."/>
            <person name="Kotter P."/>
            <person name="Entian K.-D."/>
            <person name="Rieger M."/>
            <person name="Schaefer M."/>
            <person name="Funk B."/>
            <person name="Mueller-Auer S."/>
            <person name="Silvey M."/>
            <person name="James R."/>
            <person name="Monfort A."/>
            <person name="Pons A."/>
            <person name="Puigdomenech P."/>
            <person name="Douka A."/>
            <person name="Voukelatou E."/>
            <person name="Milioni D."/>
            <person name="Hatzopoulos P."/>
            <person name="Piravandi E."/>
            <person name="Obermaier B."/>
            <person name="Hilbert H."/>
            <person name="Duesterhoeft A."/>
            <person name="Moores T."/>
            <person name="Jones J.D.G."/>
            <person name="Eneva T."/>
            <person name="Palme K."/>
            <person name="Benes V."/>
            <person name="Rechmann S."/>
            <person name="Ansorge W."/>
            <person name="Cooke R."/>
            <person name="Berger C."/>
            <person name="Delseny M."/>
            <person name="Voet M."/>
            <person name="Volckaert G."/>
            <person name="Mewes H.-W."/>
            <person name="Klosterman S."/>
            <person name="Schueller C."/>
            <person name="Chalwatzis N."/>
        </authorList>
    </citation>
    <scope>NUCLEOTIDE SEQUENCE [LARGE SCALE GENOMIC DNA]</scope>
    <source>
        <strain>cv. Columbia</strain>
    </source>
</reference>
<reference key="2">
    <citation type="journal article" date="1999" name="Nature">
        <title>Sequence and analysis of chromosome 4 of the plant Arabidopsis thaliana.</title>
        <authorList>
            <person name="Mayer K.F.X."/>
            <person name="Schueller C."/>
            <person name="Wambutt R."/>
            <person name="Murphy G."/>
            <person name="Volckaert G."/>
            <person name="Pohl T."/>
            <person name="Duesterhoeft A."/>
            <person name="Stiekema W."/>
            <person name="Entian K.-D."/>
            <person name="Terryn N."/>
            <person name="Harris B."/>
            <person name="Ansorge W."/>
            <person name="Brandt P."/>
            <person name="Grivell L.A."/>
            <person name="Rieger M."/>
            <person name="Weichselgartner M."/>
            <person name="de Simone V."/>
            <person name="Obermaier B."/>
            <person name="Mache R."/>
            <person name="Mueller M."/>
            <person name="Kreis M."/>
            <person name="Delseny M."/>
            <person name="Puigdomenech P."/>
            <person name="Watson M."/>
            <person name="Schmidtheini T."/>
            <person name="Reichert B."/>
            <person name="Portetelle D."/>
            <person name="Perez-Alonso M."/>
            <person name="Boutry M."/>
            <person name="Bancroft I."/>
            <person name="Vos P."/>
            <person name="Hoheisel J."/>
            <person name="Zimmermann W."/>
            <person name="Wedler H."/>
            <person name="Ridley P."/>
            <person name="Langham S.-A."/>
            <person name="McCullagh B."/>
            <person name="Bilham L."/>
            <person name="Robben J."/>
            <person name="van der Schueren J."/>
            <person name="Grymonprez B."/>
            <person name="Chuang Y.-J."/>
            <person name="Vandenbussche F."/>
            <person name="Braeken M."/>
            <person name="Weltjens I."/>
            <person name="Voet M."/>
            <person name="Bastiaens I."/>
            <person name="Aert R."/>
            <person name="Defoor E."/>
            <person name="Weitzenegger T."/>
            <person name="Bothe G."/>
            <person name="Ramsperger U."/>
            <person name="Hilbert H."/>
            <person name="Braun M."/>
            <person name="Holzer E."/>
            <person name="Brandt A."/>
            <person name="Peters S."/>
            <person name="van Staveren M."/>
            <person name="Dirkse W."/>
            <person name="Mooijman P."/>
            <person name="Klein Lankhorst R."/>
            <person name="Rose M."/>
            <person name="Hauf J."/>
            <person name="Koetter P."/>
            <person name="Berneiser S."/>
            <person name="Hempel S."/>
            <person name="Feldpausch M."/>
            <person name="Lamberth S."/>
            <person name="Van den Daele H."/>
            <person name="De Keyser A."/>
            <person name="Buysshaert C."/>
            <person name="Gielen J."/>
            <person name="Villarroel R."/>
            <person name="De Clercq R."/>
            <person name="van Montagu M."/>
            <person name="Rogers J."/>
            <person name="Cronin A."/>
            <person name="Quail M.A."/>
            <person name="Bray-Allen S."/>
            <person name="Clark L."/>
            <person name="Doggett J."/>
            <person name="Hall S."/>
            <person name="Kay M."/>
            <person name="Lennard N."/>
            <person name="McLay K."/>
            <person name="Mayes R."/>
            <person name="Pettett A."/>
            <person name="Rajandream M.A."/>
            <person name="Lyne M."/>
            <person name="Benes V."/>
            <person name="Rechmann S."/>
            <person name="Borkova D."/>
            <person name="Bloecker H."/>
            <person name="Scharfe M."/>
            <person name="Grimm M."/>
            <person name="Loehnert T.-H."/>
            <person name="Dose S."/>
            <person name="de Haan M."/>
            <person name="Maarse A.C."/>
            <person name="Schaefer M."/>
            <person name="Mueller-Auer S."/>
            <person name="Gabel C."/>
            <person name="Fuchs M."/>
            <person name="Fartmann B."/>
            <person name="Granderath K."/>
            <person name="Dauner D."/>
            <person name="Herzl A."/>
            <person name="Neumann S."/>
            <person name="Argiriou A."/>
            <person name="Vitale D."/>
            <person name="Liguori R."/>
            <person name="Piravandi E."/>
            <person name="Massenet O."/>
            <person name="Quigley F."/>
            <person name="Clabauld G."/>
            <person name="Muendlein A."/>
            <person name="Felber R."/>
            <person name="Schnabl S."/>
            <person name="Hiller R."/>
            <person name="Schmidt W."/>
            <person name="Lecharny A."/>
            <person name="Aubourg S."/>
            <person name="Chefdor F."/>
            <person name="Cooke R."/>
            <person name="Berger C."/>
            <person name="Monfort A."/>
            <person name="Casacuberta E."/>
            <person name="Gibbons T."/>
            <person name="Weber N."/>
            <person name="Vandenbol M."/>
            <person name="Bargues M."/>
            <person name="Terol J."/>
            <person name="Torres A."/>
            <person name="Perez-Perez A."/>
            <person name="Purnelle B."/>
            <person name="Bent E."/>
            <person name="Johnson S."/>
            <person name="Tacon D."/>
            <person name="Jesse T."/>
            <person name="Heijnen L."/>
            <person name="Schwarz S."/>
            <person name="Scholler P."/>
            <person name="Heber S."/>
            <person name="Francs P."/>
            <person name="Bielke C."/>
            <person name="Frishman D."/>
            <person name="Haase D."/>
            <person name="Lemcke K."/>
            <person name="Mewes H.-W."/>
            <person name="Stocker S."/>
            <person name="Zaccaria P."/>
            <person name="Bevan M."/>
            <person name="Wilson R.K."/>
            <person name="de la Bastide M."/>
            <person name="Habermann K."/>
            <person name="Parnell L."/>
            <person name="Dedhia N."/>
            <person name="Gnoj L."/>
            <person name="Schutz K."/>
            <person name="Huang E."/>
            <person name="Spiegel L."/>
            <person name="Sekhon M."/>
            <person name="Murray J."/>
            <person name="Sheet P."/>
            <person name="Cordes M."/>
            <person name="Abu-Threideh J."/>
            <person name="Stoneking T."/>
            <person name="Kalicki J."/>
            <person name="Graves T."/>
            <person name="Harmon G."/>
            <person name="Edwards J."/>
            <person name="Latreille P."/>
            <person name="Courtney L."/>
            <person name="Cloud J."/>
            <person name="Abbott A."/>
            <person name="Scott K."/>
            <person name="Johnson D."/>
            <person name="Minx P."/>
            <person name="Bentley D."/>
            <person name="Fulton B."/>
            <person name="Miller N."/>
            <person name="Greco T."/>
            <person name="Kemp K."/>
            <person name="Kramer J."/>
            <person name="Fulton L."/>
            <person name="Mardis E."/>
            <person name="Dante M."/>
            <person name="Pepin K."/>
            <person name="Hillier L.W."/>
            <person name="Nelson J."/>
            <person name="Spieth J."/>
            <person name="Ryan E."/>
            <person name="Andrews S."/>
            <person name="Geisel C."/>
            <person name="Layman D."/>
            <person name="Du H."/>
            <person name="Ali J."/>
            <person name="Berghoff A."/>
            <person name="Jones K."/>
            <person name="Drone K."/>
            <person name="Cotton M."/>
            <person name="Joshu C."/>
            <person name="Antonoiu B."/>
            <person name="Zidanic M."/>
            <person name="Strong C."/>
            <person name="Sun H."/>
            <person name="Lamar B."/>
            <person name="Yordan C."/>
            <person name="Ma P."/>
            <person name="Zhong J."/>
            <person name="Preston R."/>
            <person name="Vil D."/>
            <person name="Shekher M."/>
            <person name="Matero A."/>
            <person name="Shah R."/>
            <person name="Swaby I.K."/>
            <person name="O'Shaughnessy A."/>
            <person name="Rodriguez M."/>
            <person name="Hoffman J."/>
            <person name="Till S."/>
            <person name="Granat S."/>
            <person name="Shohdy N."/>
            <person name="Hasegawa A."/>
            <person name="Hameed A."/>
            <person name="Lodhi M."/>
            <person name="Johnson A."/>
            <person name="Chen E."/>
            <person name="Marra M.A."/>
            <person name="Martienssen R."/>
            <person name="McCombie W.R."/>
        </authorList>
    </citation>
    <scope>NUCLEOTIDE SEQUENCE [LARGE SCALE GENOMIC DNA]</scope>
    <source>
        <strain>cv. Columbia</strain>
    </source>
</reference>
<reference key="3">
    <citation type="journal article" date="2017" name="Plant J.">
        <title>Araport11: a complete reannotation of the Arabidopsis thaliana reference genome.</title>
        <authorList>
            <person name="Cheng C.Y."/>
            <person name="Krishnakumar V."/>
            <person name="Chan A.P."/>
            <person name="Thibaud-Nissen F."/>
            <person name="Schobel S."/>
            <person name="Town C.D."/>
        </authorList>
    </citation>
    <scope>GENOME REANNOTATION</scope>
    <source>
        <strain>cv. Columbia</strain>
    </source>
</reference>
<reference key="4">
    <citation type="journal article" date="2003" name="Science">
        <title>Empirical analysis of transcriptional activity in the Arabidopsis genome.</title>
        <authorList>
            <person name="Yamada K."/>
            <person name="Lim J."/>
            <person name="Dale J.M."/>
            <person name="Chen H."/>
            <person name="Shinn P."/>
            <person name="Palm C.J."/>
            <person name="Southwick A.M."/>
            <person name="Wu H.C."/>
            <person name="Kim C.J."/>
            <person name="Nguyen M."/>
            <person name="Pham P.K."/>
            <person name="Cheuk R.F."/>
            <person name="Karlin-Newmann G."/>
            <person name="Liu S.X."/>
            <person name="Lam B."/>
            <person name="Sakano H."/>
            <person name="Wu T."/>
            <person name="Yu G."/>
            <person name="Miranda M."/>
            <person name="Quach H.L."/>
            <person name="Tripp M."/>
            <person name="Chang C.H."/>
            <person name="Lee J.M."/>
            <person name="Toriumi M.J."/>
            <person name="Chan M.M."/>
            <person name="Tang C.C."/>
            <person name="Onodera C.S."/>
            <person name="Deng J.M."/>
            <person name="Akiyama K."/>
            <person name="Ansari Y."/>
            <person name="Arakawa T."/>
            <person name="Banh J."/>
            <person name="Banno F."/>
            <person name="Bowser L."/>
            <person name="Brooks S.Y."/>
            <person name="Carninci P."/>
            <person name="Chao Q."/>
            <person name="Choy N."/>
            <person name="Enju A."/>
            <person name="Goldsmith A.D."/>
            <person name="Gurjal M."/>
            <person name="Hansen N.F."/>
            <person name="Hayashizaki Y."/>
            <person name="Johnson-Hopson C."/>
            <person name="Hsuan V.W."/>
            <person name="Iida K."/>
            <person name="Karnes M."/>
            <person name="Khan S."/>
            <person name="Koesema E."/>
            <person name="Ishida J."/>
            <person name="Jiang P.X."/>
            <person name="Jones T."/>
            <person name="Kawai J."/>
            <person name="Kamiya A."/>
            <person name="Meyers C."/>
            <person name="Nakajima M."/>
            <person name="Narusaka M."/>
            <person name="Seki M."/>
            <person name="Sakurai T."/>
            <person name="Satou M."/>
            <person name="Tamse R."/>
            <person name="Vaysberg M."/>
            <person name="Wallender E.K."/>
            <person name="Wong C."/>
            <person name="Yamamura Y."/>
            <person name="Yuan S."/>
            <person name="Shinozaki K."/>
            <person name="Davis R.W."/>
            <person name="Theologis A."/>
            <person name="Ecker J.R."/>
        </authorList>
    </citation>
    <scope>NUCLEOTIDE SEQUENCE [LARGE SCALE MRNA]</scope>
    <source>
        <strain>cv. Columbia</strain>
    </source>
</reference>
<reference key="5">
    <citation type="submission" date="2006-07" db="EMBL/GenBank/DDBJ databases">
        <title>Large-scale analysis of RIKEN Arabidopsis full-length (RAFL) cDNAs.</title>
        <authorList>
            <person name="Totoki Y."/>
            <person name="Seki M."/>
            <person name="Ishida J."/>
            <person name="Nakajima M."/>
            <person name="Enju A."/>
            <person name="Kamiya A."/>
            <person name="Narusaka M."/>
            <person name="Shin-i T."/>
            <person name="Nakagawa M."/>
            <person name="Sakamoto N."/>
            <person name="Oishi K."/>
            <person name="Kohara Y."/>
            <person name="Kobayashi M."/>
            <person name="Toyoda A."/>
            <person name="Sakaki Y."/>
            <person name="Sakurai T."/>
            <person name="Iida K."/>
            <person name="Akiyama K."/>
            <person name="Satou M."/>
            <person name="Toyoda T."/>
            <person name="Konagaya A."/>
            <person name="Carninci P."/>
            <person name="Kawai J."/>
            <person name="Hayashizaki Y."/>
            <person name="Shinozaki K."/>
        </authorList>
    </citation>
    <scope>NUCLEOTIDE SEQUENCE [LARGE SCALE MRNA]</scope>
    <source>
        <strain>cv. Columbia</strain>
    </source>
</reference>
<reference key="6">
    <citation type="submission" date="2002-03" db="EMBL/GenBank/DDBJ databases">
        <title>Full-length cDNA from Arabidopsis thaliana.</title>
        <authorList>
            <person name="Brover V.V."/>
            <person name="Troukhan M.E."/>
            <person name="Alexandrov N.A."/>
            <person name="Lu Y.-P."/>
            <person name="Flavell R.B."/>
            <person name="Feldmann K.A."/>
        </authorList>
    </citation>
    <scope>NUCLEOTIDE SEQUENCE [LARGE SCALE MRNA]</scope>
</reference>
<reference key="7">
    <citation type="journal article" date="2007" name="Plant Cell">
        <title>Proteome analysis of Arabidopsis leaf peroxisomes reveals novel targeting peptides, metabolic pathways, and defense mechanisms.</title>
        <authorList>
            <person name="Reumann S."/>
            <person name="Babujee L."/>
            <person name="Ma C."/>
            <person name="Wienkoop S."/>
            <person name="Siemsen T."/>
            <person name="Antonicelli G.E."/>
            <person name="Rasche N."/>
            <person name="Lueder F."/>
            <person name="Weckwerth W."/>
            <person name="Jahn O."/>
        </authorList>
    </citation>
    <scope>SUBCELLULAR LOCATION</scope>
    <scope>IDENTIFICATION BY MASS SPECTROMETRY</scope>
</reference>
<reference key="8">
    <citation type="journal article" date="2008" name="Genetics">
        <title>Identification and characterization of Arabidopsis indole-3-butyric acid response mutants defective in novel peroxisomal enzymes.</title>
        <authorList>
            <person name="Zolman B.K."/>
            <person name="Martinez N."/>
            <person name="Millius A."/>
            <person name="Adham A.R."/>
            <person name="Bartel B."/>
        </authorList>
    </citation>
    <scope>DISRUPTION PHENOTYPE</scope>
</reference>
<reference key="9">
    <citation type="journal article" date="2008" name="Plant J.">
        <title>Peroxisomal Delta(3),Delta(2)-enoyl CoA isomerases and evolution of cytosolic paralogues in embryophytes.</title>
        <authorList>
            <person name="Goepfert S."/>
            <person name="Vidoudez C."/>
            <person name="Tellgren-Roth C."/>
            <person name="Delessert S."/>
            <person name="Hiltunen J.K."/>
            <person name="Poirier Y."/>
        </authorList>
    </citation>
    <scope>FUNCTION</scope>
    <scope>CATALYTIC ACTIVITY</scope>
    <scope>SUBCELLULAR LOCATION</scope>
    <scope>GENE FAMILY</scope>
</reference>
<reference key="10">
    <citation type="journal article" date="2010" name="Plant Physiol.">
        <title>Conversion of endogenous indole-3-butyric acid to indole-3-acetic acid drives cell expansion in Arabidopsis seedlings.</title>
        <authorList>
            <person name="Strader L.C."/>
            <person name="Culler A.H."/>
            <person name="Cohen J.D."/>
            <person name="Bartel B."/>
        </authorList>
    </citation>
    <scope>FUNCTION</scope>
    <scope>DISRUPTION PHENOTYPE</scope>
</reference>
<feature type="chain" id="PRO_0000432485" description="Enoyl-CoA delta isomerase 2, peroxisomal">
    <location>
        <begin position="1"/>
        <end position="240"/>
    </location>
</feature>
<feature type="short sequence motif" description="Microbody targeting signal" evidence="8">
    <location>
        <begin position="238"/>
        <end position="240"/>
    </location>
</feature>
<feature type="site" description="Important for catalytic activity" evidence="1">
    <location>
        <position position="135"/>
    </location>
</feature>
<feature type="sequence conflict" description="In Ref. 6; AAM63923." evidence="8" ref="6">
    <original>G</original>
    <variation>E</variation>
    <location>
        <position position="226"/>
    </location>
</feature>